<accession>Q73MH0</accession>
<feature type="chain" id="PRO_0000313497" description="DNA ligase">
    <location>
        <begin position="1"/>
        <end position="645"/>
    </location>
</feature>
<feature type="domain" description="BRCT" evidence="1">
    <location>
        <begin position="564"/>
        <end position="645"/>
    </location>
</feature>
<feature type="active site" description="N6-AMP-lysine intermediate" evidence="1">
    <location>
        <position position="99"/>
    </location>
</feature>
<feature type="binding site" evidence="1">
    <location>
        <begin position="30"/>
        <end position="34"/>
    </location>
    <ligand>
        <name>NAD(+)</name>
        <dbReference type="ChEBI" id="CHEBI:57540"/>
    </ligand>
</feature>
<feature type="binding site" evidence="1">
    <location>
        <begin position="72"/>
        <end position="73"/>
    </location>
    <ligand>
        <name>NAD(+)</name>
        <dbReference type="ChEBI" id="CHEBI:57540"/>
    </ligand>
</feature>
<feature type="binding site" evidence="1">
    <location>
        <position position="120"/>
    </location>
    <ligand>
        <name>NAD(+)</name>
        <dbReference type="ChEBI" id="CHEBI:57540"/>
    </ligand>
</feature>
<feature type="binding site" evidence="1">
    <location>
        <position position="163"/>
    </location>
    <ligand>
        <name>NAD(+)</name>
        <dbReference type="ChEBI" id="CHEBI:57540"/>
    </ligand>
</feature>
<feature type="binding site" evidence="1">
    <location>
        <position position="275"/>
    </location>
    <ligand>
        <name>NAD(+)</name>
        <dbReference type="ChEBI" id="CHEBI:57540"/>
    </ligand>
</feature>
<feature type="binding site" evidence="1">
    <location>
        <position position="296"/>
    </location>
    <ligand>
        <name>NAD(+)</name>
        <dbReference type="ChEBI" id="CHEBI:57540"/>
    </ligand>
</feature>
<feature type="binding site" evidence="1">
    <location>
        <position position="387"/>
    </location>
    <ligand>
        <name>Zn(2+)</name>
        <dbReference type="ChEBI" id="CHEBI:29105"/>
    </ligand>
</feature>
<feature type="binding site" evidence="1">
    <location>
        <position position="390"/>
    </location>
    <ligand>
        <name>Zn(2+)</name>
        <dbReference type="ChEBI" id="CHEBI:29105"/>
    </ligand>
</feature>
<feature type="binding site" evidence="1">
    <location>
        <position position="403"/>
    </location>
    <ligand>
        <name>Zn(2+)</name>
        <dbReference type="ChEBI" id="CHEBI:29105"/>
    </ligand>
</feature>
<feature type="binding site" evidence="1">
    <location>
        <position position="408"/>
    </location>
    <ligand>
        <name>Zn(2+)</name>
        <dbReference type="ChEBI" id="CHEBI:29105"/>
    </ligand>
</feature>
<reference key="1">
    <citation type="journal article" date="2004" name="Proc. Natl. Acad. Sci. U.S.A.">
        <title>Comparison of the genome of the oral pathogen Treponema denticola with other spirochete genomes.</title>
        <authorList>
            <person name="Seshadri R."/>
            <person name="Myers G.S.A."/>
            <person name="Tettelin H."/>
            <person name="Eisen J.A."/>
            <person name="Heidelberg J.F."/>
            <person name="Dodson R.J."/>
            <person name="Davidsen T.M."/>
            <person name="DeBoy R.T."/>
            <person name="Fouts D.E."/>
            <person name="Haft D.H."/>
            <person name="Selengut J."/>
            <person name="Ren Q."/>
            <person name="Brinkac L.M."/>
            <person name="Madupu R."/>
            <person name="Kolonay J.F."/>
            <person name="Durkin S.A."/>
            <person name="Daugherty S.C."/>
            <person name="Shetty J."/>
            <person name="Shvartsbeyn A."/>
            <person name="Gebregeorgis E."/>
            <person name="Geer K."/>
            <person name="Tsegaye G."/>
            <person name="Malek J.A."/>
            <person name="Ayodeji B."/>
            <person name="Shatsman S."/>
            <person name="McLeod M.P."/>
            <person name="Smajs D."/>
            <person name="Howell J.K."/>
            <person name="Pal S."/>
            <person name="Amin A."/>
            <person name="Vashisth P."/>
            <person name="McNeill T.Z."/>
            <person name="Xiang Q."/>
            <person name="Sodergren E."/>
            <person name="Baca E."/>
            <person name="Weinstock G.M."/>
            <person name="Norris S.J."/>
            <person name="Fraser C.M."/>
            <person name="Paulsen I.T."/>
        </authorList>
    </citation>
    <scope>NUCLEOTIDE SEQUENCE [LARGE SCALE GENOMIC DNA]</scope>
    <source>
        <strain>ATCC 35405 / DSM 14222 / CIP 103919 / JCM 8153 / KCTC 15104</strain>
    </source>
</reference>
<proteinExistence type="inferred from homology"/>
<gene>
    <name evidence="1" type="primary">ligA</name>
    <name type="ordered locus">TDE_1538</name>
</gene>
<keyword id="KW-0227">DNA damage</keyword>
<keyword id="KW-0234">DNA repair</keyword>
<keyword id="KW-0235">DNA replication</keyword>
<keyword id="KW-0436">Ligase</keyword>
<keyword id="KW-0460">Magnesium</keyword>
<keyword id="KW-0464">Manganese</keyword>
<keyword id="KW-0479">Metal-binding</keyword>
<keyword id="KW-0520">NAD</keyword>
<keyword id="KW-1185">Reference proteome</keyword>
<keyword id="KW-0862">Zinc</keyword>
<evidence type="ECO:0000255" key="1">
    <source>
        <dbReference type="HAMAP-Rule" id="MF_01588"/>
    </source>
</evidence>
<organism>
    <name type="scientific">Treponema denticola (strain ATCC 35405 / DSM 14222 / CIP 103919 / JCM 8153 / KCTC 15104)</name>
    <dbReference type="NCBI Taxonomy" id="243275"/>
    <lineage>
        <taxon>Bacteria</taxon>
        <taxon>Pseudomonadati</taxon>
        <taxon>Spirochaetota</taxon>
        <taxon>Spirochaetia</taxon>
        <taxon>Spirochaetales</taxon>
        <taxon>Treponemataceae</taxon>
        <taxon>Treponema</taxon>
    </lineage>
</organism>
<protein>
    <recommendedName>
        <fullName evidence="1">DNA ligase</fullName>
        <ecNumber evidence="1">6.5.1.2</ecNumber>
    </recommendedName>
    <alternativeName>
        <fullName evidence="1">Polydeoxyribonucleotide synthase [NAD(+)]</fullName>
    </alternativeName>
</protein>
<comment type="function">
    <text evidence="1">DNA ligase that catalyzes the formation of phosphodiester linkages between 5'-phosphoryl and 3'-hydroxyl groups in double-stranded DNA using NAD as a coenzyme and as the energy source for the reaction. It is essential for DNA replication and repair of damaged DNA.</text>
</comment>
<comment type="catalytic activity">
    <reaction evidence="1">
        <text>NAD(+) + (deoxyribonucleotide)n-3'-hydroxyl + 5'-phospho-(deoxyribonucleotide)m = (deoxyribonucleotide)n+m + AMP + beta-nicotinamide D-nucleotide.</text>
        <dbReference type="EC" id="6.5.1.2"/>
    </reaction>
</comment>
<comment type="cofactor">
    <cofactor evidence="1">
        <name>Mg(2+)</name>
        <dbReference type="ChEBI" id="CHEBI:18420"/>
    </cofactor>
    <cofactor evidence="1">
        <name>Mn(2+)</name>
        <dbReference type="ChEBI" id="CHEBI:29035"/>
    </cofactor>
</comment>
<comment type="similarity">
    <text evidence="1">Belongs to the NAD-dependent DNA ligase family. LigA subfamily.</text>
</comment>
<sequence length="645" mass="71748">MAKEKRILDLEKTIKKHQDLYYNAQPEISDAEFDALWDELKALDPQNKLFFTVPLESTEGFAKSEHIIPMGSQEKAADPPSFEAWALKMPFKEYIVQYKMDGASLELQYEEGHFVRAVTRGDGKIGDDITENVLKMKGLIKDITVNAGPAYGTKPFSGGIRCEVIMLRSIHQKYFKDKANCRNAANGLMKKKNGELCEHLNLFAYDAVQGSIGRPFTGDAPFKTESEKLVWLKKAGFNCVEVKYCKSIAEVIEYRAHVMDIRPSLDYDIDGLVIKNDTIDPEDMKRARPEKQIAFKFSLEEAVTVLKEIEWSESGATYTPIALIEPVRLAGTTVKRASLANPNIIKALNLKIGSRVVVTKRGEIIPKIEALAENPPNVKEIEYPDTCSVCGSPLTNEGTRLYCPNMSCPKLIHHRIEKWISVLDIRDFGITLIKRLFEMGRVNSITDLYTLTVEELAAIDRMGKLSAEKVYKALHSKKEISLTEFIAGFDIEGIGETMVEKLEEAGFNDLNELLGASEADFANVYQFGQVLSHTLVTNLSILKDEMTGLIDKGYIKIKPPLTSEEGAVLKGLSFCFTGELNTMKRAQAEALVKEKGGTVKSSVVKGLSYLVTNTPDSGSSKNKKAQELGTAIITEEAFLNLIGKV</sequence>
<dbReference type="EC" id="6.5.1.2" evidence="1"/>
<dbReference type="EMBL" id="AE017226">
    <property type="protein sequence ID" value="AAS12055.1"/>
    <property type="molecule type" value="Genomic_DNA"/>
</dbReference>
<dbReference type="RefSeq" id="NP_972144.1">
    <property type="nucleotide sequence ID" value="NC_002967.9"/>
</dbReference>
<dbReference type="RefSeq" id="WP_002679195.1">
    <property type="nucleotide sequence ID" value="NC_002967.9"/>
</dbReference>
<dbReference type="SMR" id="Q73MH0"/>
<dbReference type="STRING" id="243275.TDE_1538"/>
<dbReference type="PaxDb" id="243275-TDE_1538"/>
<dbReference type="GeneID" id="2740900"/>
<dbReference type="KEGG" id="tde:TDE_1538"/>
<dbReference type="PATRIC" id="fig|243275.7.peg.1475"/>
<dbReference type="eggNOG" id="COG0272">
    <property type="taxonomic scope" value="Bacteria"/>
</dbReference>
<dbReference type="HOGENOM" id="CLU_007764_2_3_12"/>
<dbReference type="OrthoDB" id="9759736at2"/>
<dbReference type="Proteomes" id="UP000008212">
    <property type="component" value="Chromosome"/>
</dbReference>
<dbReference type="GO" id="GO:0003911">
    <property type="term" value="F:DNA ligase (NAD+) activity"/>
    <property type="evidence" value="ECO:0007669"/>
    <property type="project" value="UniProtKB-UniRule"/>
</dbReference>
<dbReference type="GO" id="GO:0046872">
    <property type="term" value="F:metal ion binding"/>
    <property type="evidence" value="ECO:0007669"/>
    <property type="project" value="UniProtKB-KW"/>
</dbReference>
<dbReference type="GO" id="GO:0006281">
    <property type="term" value="P:DNA repair"/>
    <property type="evidence" value="ECO:0007669"/>
    <property type="project" value="UniProtKB-KW"/>
</dbReference>
<dbReference type="GO" id="GO:0006260">
    <property type="term" value="P:DNA replication"/>
    <property type="evidence" value="ECO:0007669"/>
    <property type="project" value="UniProtKB-KW"/>
</dbReference>
<dbReference type="CDD" id="cd17748">
    <property type="entry name" value="BRCT_DNA_ligase_like"/>
    <property type="match status" value="1"/>
</dbReference>
<dbReference type="Gene3D" id="1.10.150.20">
    <property type="entry name" value="5' to 3' exonuclease, C-terminal subdomain"/>
    <property type="match status" value="2"/>
</dbReference>
<dbReference type="Gene3D" id="3.40.50.10190">
    <property type="entry name" value="BRCT domain"/>
    <property type="match status" value="1"/>
</dbReference>
<dbReference type="Gene3D" id="3.30.470.30">
    <property type="entry name" value="DNA ligase/mRNA capping enzyme"/>
    <property type="match status" value="1"/>
</dbReference>
<dbReference type="Gene3D" id="1.10.287.610">
    <property type="entry name" value="Helix hairpin bin"/>
    <property type="match status" value="1"/>
</dbReference>
<dbReference type="Gene3D" id="2.40.50.140">
    <property type="entry name" value="Nucleic acid-binding proteins"/>
    <property type="match status" value="1"/>
</dbReference>
<dbReference type="HAMAP" id="MF_01588">
    <property type="entry name" value="DNA_ligase_A"/>
    <property type="match status" value="1"/>
</dbReference>
<dbReference type="InterPro" id="IPR001357">
    <property type="entry name" value="BRCT_dom"/>
</dbReference>
<dbReference type="InterPro" id="IPR036420">
    <property type="entry name" value="BRCT_dom_sf"/>
</dbReference>
<dbReference type="InterPro" id="IPR001679">
    <property type="entry name" value="DNA_ligase"/>
</dbReference>
<dbReference type="InterPro" id="IPR018239">
    <property type="entry name" value="DNA_ligase_AS"/>
</dbReference>
<dbReference type="InterPro" id="IPR013839">
    <property type="entry name" value="DNAligase_adenylation"/>
</dbReference>
<dbReference type="InterPro" id="IPR013840">
    <property type="entry name" value="DNAligase_N"/>
</dbReference>
<dbReference type="InterPro" id="IPR012340">
    <property type="entry name" value="NA-bd_OB-fold"/>
</dbReference>
<dbReference type="InterPro" id="IPR004150">
    <property type="entry name" value="NAD_DNA_ligase_OB"/>
</dbReference>
<dbReference type="InterPro" id="IPR010994">
    <property type="entry name" value="RuvA_2-like"/>
</dbReference>
<dbReference type="NCBIfam" id="TIGR00575">
    <property type="entry name" value="dnlj"/>
    <property type="match status" value="1"/>
</dbReference>
<dbReference type="NCBIfam" id="NF005932">
    <property type="entry name" value="PRK07956.1"/>
    <property type="match status" value="1"/>
</dbReference>
<dbReference type="Pfam" id="PF00533">
    <property type="entry name" value="BRCT"/>
    <property type="match status" value="1"/>
</dbReference>
<dbReference type="Pfam" id="PF01653">
    <property type="entry name" value="DNA_ligase_aden"/>
    <property type="match status" value="1"/>
</dbReference>
<dbReference type="Pfam" id="PF03120">
    <property type="entry name" value="DNA_ligase_OB"/>
    <property type="match status" value="1"/>
</dbReference>
<dbReference type="PIRSF" id="PIRSF001604">
    <property type="entry name" value="LigA"/>
    <property type="match status" value="1"/>
</dbReference>
<dbReference type="SMART" id="SM00292">
    <property type="entry name" value="BRCT"/>
    <property type="match status" value="1"/>
</dbReference>
<dbReference type="SMART" id="SM00532">
    <property type="entry name" value="LIGANc"/>
    <property type="match status" value="1"/>
</dbReference>
<dbReference type="SUPFAM" id="SSF52113">
    <property type="entry name" value="BRCT domain"/>
    <property type="match status" value="1"/>
</dbReference>
<dbReference type="SUPFAM" id="SSF56091">
    <property type="entry name" value="DNA ligase/mRNA capping enzyme, catalytic domain"/>
    <property type="match status" value="1"/>
</dbReference>
<dbReference type="SUPFAM" id="SSF50249">
    <property type="entry name" value="Nucleic acid-binding proteins"/>
    <property type="match status" value="1"/>
</dbReference>
<dbReference type="SUPFAM" id="SSF47781">
    <property type="entry name" value="RuvA domain 2-like"/>
    <property type="match status" value="1"/>
</dbReference>
<dbReference type="PROSITE" id="PS50172">
    <property type="entry name" value="BRCT"/>
    <property type="match status" value="1"/>
</dbReference>
<dbReference type="PROSITE" id="PS01055">
    <property type="entry name" value="DNA_LIGASE_N1"/>
    <property type="match status" value="1"/>
</dbReference>
<name>DNLJ_TREDE</name>